<feature type="chain" id="PRO_1000094644" description="3-dehydroquinate synthase">
    <location>
        <begin position="1"/>
        <end position="350"/>
    </location>
</feature>
<feature type="binding site" evidence="1">
    <location>
        <begin position="63"/>
        <end position="68"/>
    </location>
    <ligand>
        <name>NAD(+)</name>
        <dbReference type="ChEBI" id="CHEBI:57540"/>
    </ligand>
</feature>
<feature type="binding site" evidence="1">
    <location>
        <begin position="97"/>
        <end position="101"/>
    </location>
    <ligand>
        <name>NAD(+)</name>
        <dbReference type="ChEBI" id="CHEBI:57540"/>
    </ligand>
</feature>
<feature type="binding site" evidence="1">
    <location>
        <begin position="121"/>
        <end position="122"/>
    </location>
    <ligand>
        <name>NAD(+)</name>
        <dbReference type="ChEBI" id="CHEBI:57540"/>
    </ligand>
</feature>
<feature type="binding site" evidence="1">
    <location>
        <position position="134"/>
    </location>
    <ligand>
        <name>NAD(+)</name>
        <dbReference type="ChEBI" id="CHEBI:57540"/>
    </ligand>
</feature>
<feature type="binding site" evidence="1">
    <location>
        <position position="143"/>
    </location>
    <ligand>
        <name>NAD(+)</name>
        <dbReference type="ChEBI" id="CHEBI:57540"/>
    </ligand>
</feature>
<feature type="binding site" evidence="1">
    <location>
        <begin position="161"/>
        <end position="164"/>
    </location>
    <ligand>
        <name>NAD(+)</name>
        <dbReference type="ChEBI" id="CHEBI:57540"/>
    </ligand>
</feature>
<feature type="binding site" evidence="1">
    <location>
        <position position="176"/>
    </location>
    <ligand>
        <name>Zn(2+)</name>
        <dbReference type="ChEBI" id="CHEBI:29105"/>
    </ligand>
</feature>
<feature type="binding site" evidence="1">
    <location>
        <position position="235"/>
    </location>
    <ligand>
        <name>Zn(2+)</name>
        <dbReference type="ChEBI" id="CHEBI:29105"/>
    </ligand>
</feature>
<feature type="binding site" evidence="1">
    <location>
        <position position="252"/>
    </location>
    <ligand>
        <name>Zn(2+)</name>
        <dbReference type="ChEBI" id="CHEBI:29105"/>
    </ligand>
</feature>
<organism>
    <name type="scientific">Sulfurovum sp. (strain NBC37-1)</name>
    <dbReference type="NCBI Taxonomy" id="387093"/>
    <lineage>
        <taxon>Bacteria</taxon>
        <taxon>Pseudomonadati</taxon>
        <taxon>Campylobacterota</taxon>
        <taxon>Epsilonproteobacteria</taxon>
        <taxon>Campylobacterales</taxon>
        <taxon>Sulfurovaceae</taxon>
        <taxon>Sulfurovum</taxon>
    </lineage>
</organism>
<protein>
    <recommendedName>
        <fullName evidence="1">3-dehydroquinate synthase</fullName>
        <shortName evidence="1">DHQS</shortName>
        <ecNumber evidence="1">4.2.3.4</ecNumber>
    </recommendedName>
</protein>
<name>AROB_SULNB</name>
<comment type="function">
    <text evidence="1">Catalyzes the conversion of 3-deoxy-D-arabino-heptulosonate 7-phosphate (DAHP) to dehydroquinate (DHQ).</text>
</comment>
<comment type="catalytic activity">
    <reaction evidence="1">
        <text>7-phospho-2-dehydro-3-deoxy-D-arabino-heptonate = 3-dehydroquinate + phosphate</text>
        <dbReference type="Rhea" id="RHEA:21968"/>
        <dbReference type="ChEBI" id="CHEBI:32364"/>
        <dbReference type="ChEBI" id="CHEBI:43474"/>
        <dbReference type="ChEBI" id="CHEBI:58394"/>
        <dbReference type="EC" id="4.2.3.4"/>
    </reaction>
</comment>
<comment type="cofactor">
    <cofactor evidence="1">
        <name>Co(2+)</name>
        <dbReference type="ChEBI" id="CHEBI:48828"/>
    </cofactor>
    <cofactor evidence="1">
        <name>Zn(2+)</name>
        <dbReference type="ChEBI" id="CHEBI:29105"/>
    </cofactor>
    <text evidence="1">Binds 1 divalent metal cation per subunit. Can use either Co(2+) or Zn(2+).</text>
</comment>
<comment type="cofactor">
    <cofactor evidence="1">
        <name>NAD(+)</name>
        <dbReference type="ChEBI" id="CHEBI:57540"/>
    </cofactor>
</comment>
<comment type="pathway">
    <text evidence="1">Metabolic intermediate biosynthesis; chorismate biosynthesis; chorismate from D-erythrose 4-phosphate and phosphoenolpyruvate: step 2/7.</text>
</comment>
<comment type="subcellular location">
    <subcellularLocation>
        <location evidence="1">Cytoplasm</location>
    </subcellularLocation>
</comment>
<comment type="similarity">
    <text evidence="1">Belongs to the sugar phosphate cyclases superfamily. Dehydroquinate synthase family.</text>
</comment>
<gene>
    <name evidence="1" type="primary">aroB</name>
    <name type="ordered locus">SUN_1010</name>
</gene>
<evidence type="ECO:0000255" key="1">
    <source>
        <dbReference type="HAMAP-Rule" id="MF_00110"/>
    </source>
</evidence>
<dbReference type="EC" id="4.2.3.4" evidence="1"/>
<dbReference type="EMBL" id="AP009179">
    <property type="protein sequence ID" value="BAF71967.1"/>
    <property type="molecule type" value="Genomic_DNA"/>
</dbReference>
<dbReference type="RefSeq" id="WP_011980700.1">
    <property type="nucleotide sequence ID" value="NC_009663.1"/>
</dbReference>
<dbReference type="SMR" id="A6Q908"/>
<dbReference type="STRING" id="387093.SUN_1010"/>
<dbReference type="KEGG" id="sun:SUN_1010"/>
<dbReference type="eggNOG" id="COG0337">
    <property type="taxonomic scope" value="Bacteria"/>
</dbReference>
<dbReference type="HOGENOM" id="CLU_001201_0_2_7"/>
<dbReference type="OrthoDB" id="9806583at2"/>
<dbReference type="UniPathway" id="UPA00053">
    <property type="reaction ID" value="UER00085"/>
</dbReference>
<dbReference type="Proteomes" id="UP000006378">
    <property type="component" value="Chromosome"/>
</dbReference>
<dbReference type="GO" id="GO:0005737">
    <property type="term" value="C:cytoplasm"/>
    <property type="evidence" value="ECO:0007669"/>
    <property type="project" value="UniProtKB-SubCell"/>
</dbReference>
<dbReference type="GO" id="GO:0003856">
    <property type="term" value="F:3-dehydroquinate synthase activity"/>
    <property type="evidence" value="ECO:0007669"/>
    <property type="project" value="UniProtKB-UniRule"/>
</dbReference>
<dbReference type="GO" id="GO:0046872">
    <property type="term" value="F:metal ion binding"/>
    <property type="evidence" value="ECO:0007669"/>
    <property type="project" value="UniProtKB-KW"/>
</dbReference>
<dbReference type="GO" id="GO:0000166">
    <property type="term" value="F:nucleotide binding"/>
    <property type="evidence" value="ECO:0007669"/>
    <property type="project" value="UniProtKB-KW"/>
</dbReference>
<dbReference type="GO" id="GO:0008652">
    <property type="term" value="P:amino acid biosynthetic process"/>
    <property type="evidence" value="ECO:0007669"/>
    <property type="project" value="UniProtKB-KW"/>
</dbReference>
<dbReference type="GO" id="GO:0009073">
    <property type="term" value="P:aromatic amino acid family biosynthetic process"/>
    <property type="evidence" value="ECO:0007669"/>
    <property type="project" value="UniProtKB-KW"/>
</dbReference>
<dbReference type="GO" id="GO:0009423">
    <property type="term" value="P:chorismate biosynthetic process"/>
    <property type="evidence" value="ECO:0007669"/>
    <property type="project" value="UniProtKB-UniRule"/>
</dbReference>
<dbReference type="CDD" id="cd08195">
    <property type="entry name" value="DHQS"/>
    <property type="match status" value="1"/>
</dbReference>
<dbReference type="FunFam" id="3.40.50.1970:FF:000007">
    <property type="entry name" value="Pentafunctional AROM polypeptide"/>
    <property type="match status" value="1"/>
</dbReference>
<dbReference type="Gene3D" id="3.40.50.1970">
    <property type="match status" value="1"/>
</dbReference>
<dbReference type="Gene3D" id="1.20.1090.10">
    <property type="entry name" value="Dehydroquinate synthase-like - alpha domain"/>
    <property type="match status" value="1"/>
</dbReference>
<dbReference type="HAMAP" id="MF_00110">
    <property type="entry name" value="DHQ_synthase"/>
    <property type="match status" value="1"/>
</dbReference>
<dbReference type="InterPro" id="IPR050071">
    <property type="entry name" value="Dehydroquinate_synthase"/>
</dbReference>
<dbReference type="InterPro" id="IPR016037">
    <property type="entry name" value="DHQ_synth_AroB"/>
</dbReference>
<dbReference type="InterPro" id="IPR030963">
    <property type="entry name" value="DHQ_synth_fam"/>
</dbReference>
<dbReference type="InterPro" id="IPR030960">
    <property type="entry name" value="DHQS/DOIS_N"/>
</dbReference>
<dbReference type="InterPro" id="IPR056179">
    <property type="entry name" value="DHQS_C"/>
</dbReference>
<dbReference type="NCBIfam" id="TIGR01357">
    <property type="entry name" value="aroB"/>
    <property type="match status" value="1"/>
</dbReference>
<dbReference type="PANTHER" id="PTHR43622">
    <property type="entry name" value="3-DEHYDROQUINATE SYNTHASE"/>
    <property type="match status" value="1"/>
</dbReference>
<dbReference type="PANTHER" id="PTHR43622:SF7">
    <property type="entry name" value="3-DEHYDROQUINATE SYNTHASE, CHLOROPLASTIC"/>
    <property type="match status" value="1"/>
</dbReference>
<dbReference type="Pfam" id="PF01761">
    <property type="entry name" value="DHQ_synthase"/>
    <property type="match status" value="1"/>
</dbReference>
<dbReference type="Pfam" id="PF24621">
    <property type="entry name" value="DHQS_C"/>
    <property type="match status" value="1"/>
</dbReference>
<dbReference type="PIRSF" id="PIRSF001455">
    <property type="entry name" value="DHQ_synth"/>
    <property type="match status" value="1"/>
</dbReference>
<dbReference type="SUPFAM" id="SSF56796">
    <property type="entry name" value="Dehydroquinate synthase-like"/>
    <property type="match status" value="1"/>
</dbReference>
<accession>A6Q908</accession>
<sequence length="350" mass="38807">MIVPIELAHTKNITYDITIDALPQLTFDTKVAVVTNPTVAGYHLQTLLAHIKAPQLEVITVPDGEEYKTLETVETILNELFEHKFDRKSLLIAFGGGVIGDMTGFTASLYQRGIDFIQIPTTLLSQVDASVGGKTGVNNRYGKNLIGAFYQPKAVYIDPAFLKTLPSREFSAGVAEIIKMAVMFDKDYFEFLVTADLSDEEVLKETIRRSVELKAWVVNQDEKEAGIRAVLNYGHTFGHVVENETGYTTYLHGEAVAIGMVMANALAVELGLLGETEADRIKALLEKASLPTHYTIKDVDDFYEHFFLDKKSANNSIKFILPEGIGGHKIVSDIDESVVKNVLKKFEEEV</sequence>
<reference key="1">
    <citation type="journal article" date="2007" name="Proc. Natl. Acad. Sci. U.S.A.">
        <title>Deep-sea vent epsilon-proteobacterial genomes provide insights into emergence of pathogens.</title>
        <authorList>
            <person name="Nakagawa S."/>
            <person name="Takaki Y."/>
            <person name="Shimamura S."/>
            <person name="Reysenbach A.-L."/>
            <person name="Takai K."/>
            <person name="Horikoshi K."/>
        </authorList>
    </citation>
    <scope>NUCLEOTIDE SEQUENCE [LARGE SCALE GENOMIC DNA]</scope>
    <source>
        <strain>NBC37-1</strain>
    </source>
</reference>
<proteinExistence type="inferred from homology"/>
<keyword id="KW-0028">Amino-acid biosynthesis</keyword>
<keyword id="KW-0057">Aromatic amino acid biosynthesis</keyword>
<keyword id="KW-0170">Cobalt</keyword>
<keyword id="KW-0963">Cytoplasm</keyword>
<keyword id="KW-0456">Lyase</keyword>
<keyword id="KW-0479">Metal-binding</keyword>
<keyword id="KW-0520">NAD</keyword>
<keyword id="KW-0547">Nucleotide-binding</keyword>
<keyword id="KW-0862">Zinc</keyword>